<dbReference type="EMBL" id="CP000036">
    <property type="protein sequence ID" value="ABB65813.1"/>
    <property type="molecule type" value="Genomic_DNA"/>
</dbReference>
<dbReference type="RefSeq" id="WP_000580323.1">
    <property type="nucleotide sequence ID" value="NC_007613.1"/>
</dbReference>
<dbReference type="SMR" id="Q322E5"/>
<dbReference type="GeneID" id="75057740"/>
<dbReference type="KEGG" id="sbo:SBO_1178"/>
<dbReference type="HOGENOM" id="CLU_087936_0_0_6"/>
<dbReference type="Proteomes" id="UP000007067">
    <property type="component" value="Chromosome"/>
</dbReference>
<dbReference type="GO" id="GO:0005737">
    <property type="term" value="C:cytoplasm"/>
    <property type="evidence" value="ECO:0007669"/>
    <property type="project" value="UniProtKB-SubCell"/>
</dbReference>
<dbReference type="GO" id="GO:0009379">
    <property type="term" value="C:Holliday junction helicase complex"/>
    <property type="evidence" value="ECO:0007669"/>
    <property type="project" value="InterPro"/>
</dbReference>
<dbReference type="GO" id="GO:0048476">
    <property type="term" value="C:Holliday junction resolvase complex"/>
    <property type="evidence" value="ECO:0007669"/>
    <property type="project" value="UniProtKB-UniRule"/>
</dbReference>
<dbReference type="GO" id="GO:0005524">
    <property type="term" value="F:ATP binding"/>
    <property type="evidence" value="ECO:0007669"/>
    <property type="project" value="InterPro"/>
</dbReference>
<dbReference type="GO" id="GO:0000400">
    <property type="term" value="F:four-way junction DNA binding"/>
    <property type="evidence" value="ECO:0007669"/>
    <property type="project" value="UniProtKB-UniRule"/>
</dbReference>
<dbReference type="GO" id="GO:0009378">
    <property type="term" value="F:four-way junction helicase activity"/>
    <property type="evidence" value="ECO:0007669"/>
    <property type="project" value="InterPro"/>
</dbReference>
<dbReference type="GO" id="GO:0006310">
    <property type="term" value="P:DNA recombination"/>
    <property type="evidence" value="ECO:0007669"/>
    <property type="project" value="UniProtKB-UniRule"/>
</dbReference>
<dbReference type="GO" id="GO:0006281">
    <property type="term" value="P:DNA repair"/>
    <property type="evidence" value="ECO:0007669"/>
    <property type="project" value="UniProtKB-UniRule"/>
</dbReference>
<dbReference type="CDD" id="cd14332">
    <property type="entry name" value="UBA_RuvA_C"/>
    <property type="match status" value="1"/>
</dbReference>
<dbReference type="FunFam" id="1.10.150.20:FF:000012">
    <property type="entry name" value="Holliday junction ATP-dependent DNA helicase RuvA"/>
    <property type="match status" value="1"/>
</dbReference>
<dbReference type="FunFam" id="1.10.8.10:FF:000008">
    <property type="entry name" value="Holliday junction ATP-dependent DNA helicase RuvA"/>
    <property type="match status" value="1"/>
</dbReference>
<dbReference type="FunFam" id="2.40.50.140:FF:000083">
    <property type="entry name" value="Holliday junction ATP-dependent DNA helicase RuvA"/>
    <property type="match status" value="1"/>
</dbReference>
<dbReference type="Gene3D" id="1.10.150.20">
    <property type="entry name" value="5' to 3' exonuclease, C-terminal subdomain"/>
    <property type="match status" value="1"/>
</dbReference>
<dbReference type="Gene3D" id="1.10.8.10">
    <property type="entry name" value="DNA helicase RuvA subunit, C-terminal domain"/>
    <property type="match status" value="1"/>
</dbReference>
<dbReference type="Gene3D" id="2.40.50.140">
    <property type="entry name" value="Nucleic acid-binding proteins"/>
    <property type="match status" value="1"/>
</dbReference>
<dbReference type="HAMAP" id="MF_00031">
    <property type="entry name" value="DNA_HJ_migration_RuvA"/>
    <property type="match status" value="1"/>
</dbReference>
<dbReference type="InterPro" id="IPR013849">
    <property type="entry name" value="DNA_helicase_Holl-junc_RuvA_I"/>
</dbReference>
<dbReference type="InterPro" id="IPR003583">
    <property type="entry name" value="Hlx-hairpin-Hlx_DNA-bd_motif"/>
</dbReference>
<dbReference type="InterPro" id="IPR012340">
    <property type="entry name" value="NA-bd_OB-fold"/>
</dbReference>
<dbReference type="InterPro" id="IPR000085">
    <property type="entry name" value="RuvA"/>
</dbReference>
<dbReference type="InterPro" id="IPR010994">
    <property type="entry name" value="RuvA_2-like"/>
</dbReference>
<dbReference type="InterPro" id="IPR011114">
    <property type="entry name" value="RuvA_C"/>
</dbReference>
<dbReference type="InterPro" id="IPR036267">
    <property type="entry name" value="RuvA_C_sf"/>
</dbReference>
<dbReference type="NCBIfam" id="TIGR00084">
    <property type="entry name" value="ruvA"/>
    <property type="match status" value="1"/>
</dbReference>
<dbReference type="Pfam" id="PF14520">
    <property type="entry name" value="HHH_5"/>
    <property type="match status" value="1"/>
</dbReference>
<dbReference type="Pfam" id="PF07499">
    <property type="entry name" value="RuvA_C"/>
    <property type="match status" value="1"/>
</dbReference>
<dbReference type="Pfam" id="PF01330">
    <property type="entry name" value="RuvA_N"/>
    <property type="match status" value="1"/>
</dbReference>
<dbReference type="SMART" id="SM00278">
    <property type="entry name" value="HhH1"/>
    <property type="match status" value="2"/>
</dbReference>
<dbReference type="SUPFAM" id="SSF46929">
    <property type="entry name" value="DNA helicase RuvA subunit, C-terminal domain"/>
    <property type="match status" value="1"/>
</dbReference>
<dbReference type="SUPFAM" id="SSF50249">
    <property type="entry name" value="Nucleic acid-binding proteins"/>
    <property type="match status" value="1"/>
</dbReference>
<dbReference type="SUPFAM" id="SSF47781">
    <property type="entry name" value="RuvA domain 2-like"/>
    <property type="match status" value="1"/>
</dbReference>
<keyword id="KW-0963">Cytoplasm</keyword>
<keyword id="KW-0227">DNA damage</keyword>
<keyword id="KW-0233">DNA recombination</keyword>
<keyword id="KW-0234">DNA repair</keyword>
<keyword id="KW-0238">DNA-binding</keyword>
<protein>
    <recommendedName>
        <fullName evidence="1">Holliday junction branch migration complex subunit RuvA</fullName>
    </recommendedName>
</protein>
<evidence type="ECO:0000255" key="1">
    <source>
        <dbReference type="HAMAP-Rule" id="MF_00031"/>
    </source>
</evidence>
<gene>
    <name evidence="1" type="primary">ruvA</name>
    <name type="ordered locus">SBO_1178</name>
</gene>
<organism>
    <name type="scientific">Shigella boydii serotype 4 (strain Sb227)</name>
    <dbReference type="NCBI Taxonomy" id="300268"/>
    <lineage>
        <taxon>Bacteria</taxon>
        <taxon>Pseudomonadati</taxon>
        <taxon>Pseudomonadota</taxon>
        <taxon>Gammaproteobacteria</taxon>
        <taxon>Enterobacterales</taxon>
        <taxon>Enterobacteriaceae</taxon>
        <taxon>Shigella</taxon>
    </lineage>
</organism>
<reference key="1">
    <citation type="journal article" date="2005" name="Nucleic Acids Res.">
        <title>Genome dynamics and diversity of Shigella species, the etiologic agents of bacillary dysentery.</title>
        <authorList>
            <person name="Yang F."/>
            <person name="Yang J."/>
            <person name="Zhang X."/>
            <person name="Chen L."/>
            <person name="Jiang Y."/>
            <person name="Yan Y."/>
            <person name="Tang X."/>
            <person name="Wang J."/>
            <person name="Xiong Z."/>
            <person name="Dong J."/>
            <person name="Xue Y."/>
            <person name="Zhu Y."/>
            <person name="Xu X."/>
            <person name="Sun L."/>
            <person name="Chen S."/>
            <person name="Nie H."/>
            <person name="Peng J."/>
            <person name="Xu J."/>
            <person name="Wang Y."/>
            <person name="Yuan Z."/>
            <person name="Wen Y."/>
            <person name="Yao Z."/>
            <person name="Shen Y."/>
            <person name="Qiang B."/>
            <person name="Hou Y."/>
            <person name="Yu J."/>
            <person name="Jin Q."/>
        </authorList>
    </citation>
    <scope>NUCLEOTIDE SEQUENCE [LARGE SCALE GENOMIC DNA]</scope>
    <source>
        <strain>Sb227</strain>
    </source>
</reference>
<feature type="chain" id="PRO_0000224906" description="Holliday junction branch migration complex subunit RuvA">
    <location>
        <begin position="1"/>
        <end position="203"/>
    </location>
</feature>
<feature type="region of interest" description="Domain I" evidence="1">
    <location>
        <begin position="1"/>
        <end position="64"/>
    </location>
</feature>
<feature type="region of interest" description="Domain II" evidence="1">
    <location>
        <begin position="65"/>
        <end position="142"/>
    </location>
</feature>
<feature type="region of interest" description="Flexible linker" evidence="1">
    <location>
        <begin position="143"/>
        <end position="154"/>
    </location>
</feature>
<feature type="region of interest" description="Domain III" evidence="1">
    <location>
        <begin position="155"/>
        <end position="203"/>
    </location>
</feature>
<proteinExistence type="inferred from homology"/>
<name>RUVA_SHIBS</name>
<accession>Q322E5</accession>
<sequence length="203" mass="22086">MIGRLRGIIIEKQPPLVLIEVGGVGYEVHMPMTCFYELPEAGQEAIVFTHFVVREDAQLLYGFNNKQERTLFKELIKTNGVGPKLALAILSGMSAQQFVNAVEREEVGALVKLPGIGKKTAERLIVEMKDRFKGLHGDLFTPAADLVLTSPASPATDDAEQEAVAALVALGYKPQEASRMVSKIARPDASSETLIREALRAAL</sequence>
<comment type="function">
    <text evidence="1">The RuvA-RuvB-RuvC complex processes Holliday junction (HJ) DNA during genetic recombination and DNA repair, while the RuvA-RuvB complex plays an important role in the rescue of blocked DNA replication forks via replication fork reversal (RFR). RuvA specifically binds to HJ cruciform DNA, conferring on it an open structure. The RuvB hexamer acts as an ATP-dependent pump, pulling dsDNA into and through the RuvAB complex. HJ branch migration allows RuvC to scan DNA until it finds its consensus sequence, where it cleaves and resolves the cruciform DNA.</text>
</comment>
<comment type="subunit">
    <text evidence="1">Homotetramer. Forms an RuvA(8)-RuvB(12)-Holliday junction (HJ) complex. HJ DNA is sandwiched between 2 RuvA tetramers; dsDNA enters through RuvA and exits via RuvB. An RuvB hexamer assembles on each DNA strand where it exits the tetramer. Each RuvB hexamer is contacted by two RuvA subunits (via domain III) on 2 adjacent RuvB subunits; this complex drives branch migration. In the full resolvosome a probable DNA-RuvA(4)-RuvB(12)-RuvC(2) complex forms which resolves the HJ.</text>
</comment>
<comment type="subcellular location">
    <subcellularLocation>
        <location evidence="1">Cytoplasm</location>
    </subcellularLocation>
</comment>
<comment type="domain">
    <text evidence="1">Has three domains with a flexible linker between the domains II and III and assumes an 'L' shape. Domain III is highly mobile and contacts RuvB.</text>
</comment>
<comment type="similarity">
    <text evidence="1">Belongs to the RuvA family.</text>
</comment>